<dbReference type="EMBL" id="CH408054">
    <property type="protein sequence ID" value="EDV09431.1"/>
    <property type="molecule type" value="Genomic_DNA"/>
</dbReference>
<dbReference type="SMR" id="B3LT96"/>
<dbReference type="HOGENOM" id="CLU_022388_0_0_1"/>
<dbReference type="OrthoDB" id="38476at4893"/>
<dbReference type="Proteomes" id="UP000008335">
    <property type="component" value="Unassembled WGS sequence"/>
</dbReference>
<dbReference type="GO" id="GO:0005737">
    <property type="term" value="C:cytoplasm"/>
    <property type="evidence" value="ECO:0007669"/>
    <property type="project" value="UniProtKB-SubCell"/>
</dbReference>
<dbReference type="GO" id="GO:0033557">
    <property type="term" value="C:Slx1-Slx4 complex"/>
    <property type="evidence" value="ECO:0007669"/>
    <property type="project" value="UniProtKB-UniRule"/>
</dbReference>
<dbReference type="GO" id="GO:0017108">
    <property type="term" value="F:5'-flap endonuclease activity"/>
    <property type="evidence" value="ECO:0007669"/>
    <property type="project" value="InterPro"/>
</dbReference>
<dbReference type="GO" id="GO:0006310">
    <property type="term" value="P:DNA recombination"/>
    <property type="evidence" value="ECO:0007669"/>
    <property type="project" value="UniProtKB-UniRule"/>
</dbReference>
<dbReference type="GO" id="GO:0006281">
    <property type="term" value="P:DNA repair"/>
    <property type="evidence" value="ECO:0007669"/>
    <property type="project" value="UniProtKB-UniRule"/>
</dbReference>
<dbReference type="GO" id="GO:0006260">
    <property type="term" value="P:DNA replication"/>
    <property type="evidence" value="ECO:0007669"/>
    <property type="project" value="InterPro"/>
</dbReference>
<dbReference type="CDD" id="cd22869">
    <property type="entry name" value="SLX4_RIM2"/>
    <property type="match status" value="1"/>
</dbReference>
<dbReference type="HAMAP" id="MF_03110">
    <property type="entry name" value="Endonuc_su_Slx4"/>
    <property type="match status" value="1"/>
</dbReference>
<dbReference type="InterPro" id="IPR027784">
    <property type="entry name" value="Slx4_ascomycetes"/>
</dbReference>
<dbReference type="InterPro" id="IPR018574">
    <property type="entry name" value="Structure-sp_endonuc_su_Slx4"/>
</dbReference>
<dbReference type="Pfam" id="PF09494">
    <property type="entry name" value="Slx4"/>
    <property type="match status" value="1"/>
</dbReference>
<reference key="1">
    <citation type="submission" date="2005-03" db="EMBL/GenBank/DDBJ databases">
        <title>Annotation of the Saccharomyces cerevisiae RM11-1a genome.</title>
        <authorList>
            <consortium name="The Broad Institute Genome Sequencing Platform"/>
            <person name="Birren B.W."/>
            <person name="Lander E.S."/>
            <person name="Galagan J.E."/>
            <person name="Nusbaum C."/>
            <person name="Devon K."/>
            <person name="Cuomo C."/>
            <person name="Jaffe D.B."/>
            <person name="Butler J."/>
            <person name="Alvarez P."/>
            <person name="Gnerre S."/>
            <person name="Grabherr M."/>
            <person name="Kleber M."/>
            <person name="Mauceli E.W."/>
            <person name="Brockman W."/>
            <person name="MacCallum I.A."/>
            <person name="Rounsley S."/>
            <person name="Young S.K."/>
            <person name="LaButti K."/>
            <person name="Pushparaj V."/>
            <person name="DeCaprio D."/>
            <person name="Crawford M."/>
            <person name="Koehrsen M."/>
            <person name="Engels R."/>
            <person name="Montgomery P."/>
            <person name="Pearson M."/>
            <person name="Howarth C."/>
            <person name="Larson L."/>
            <person name="Luoma S."/>
            <person name="White J."/>
            <person name="O'Leary S."/>
            <person name="Kodira C.D."/>
            <person name="Zeng Q."/>
            <person name="Yandava C."/>
            <person name="Alvarado L."/>
            <person name="Pratt S."/>
            <person name="Kruglyak L."/>
        </authorList>
    </citation>
    <scope>NUCLEOTIDE SEQUENCE [LARGE SCALE GENOMIC DNA]</scope>
    <source>
        <strain>RM11-1a</strain>
    </source>
</reference>
<protein>
    <recommendedName>
        <fullName evidence="3">Structure-specific endonuclease subunit SLX4</fullName>
    </recommendedName>
</protein>
<name>SLX4_YEAS1</name>
<sequence length="748" mass="84362">MELQRAQRNLKFLQNEDYVNVTDQTNLNGESQNAYSLGMETQVPEMQFSLSSDDDSIGTQVKSVTAQKSPMTQETTKNDTERNKDVDKSCNPVSTSHPDLGGSNIEENIFINTQIQSRLDDAEEETNLKLKLEKFKYSFKSSNADDTHSNANVTAKRRPAIRKANSKLKTKPKTKRDPKIIKNITDFNINNYERSRTASLLKQLSGKHKKVLDIIKTQNEGNSDKPPRARNNKGEKATFDTYSEQEWKDIMKLLLQKFPQSEETDLNEVQKFLYGSEKSSNSLDNQESSQQRLWTASQLPPELPDEAIQPEQEERIRDTQSAVNFLSLSQVMDDKSEIMKDEESIIISRGDSTSSQEYGNGLEPQQPVGNVVGEDIELAVGTRINAFSLTDYKACKPMSVEVSRRCENSTDNDYDNISIVSDTTDETSTLFPLDQYRYVFIENDERPPLATDTIGSTQFFTPNTSPLDGIIDLTQESFKAVRSLISPLKVENNKTGVTSQASNQVQVPATRTPTIIPQKNLTTTLKTEEEKNNIGSSIRVKLLQESVVKLNPKLVKHNFYRVEANDSEEEETEFDDQFCIADIQLVDSSKISTKDSTQNPTTSNDIIDTSAASSIASPEKFCEIMMSQSMKELRQSLKTVGLKPMRTKVEIIQSLQTASQILSTANPDNKGEHGGVANFSKIEIFDHLTELIEAFPDFLERIYTFEPIPLNELIEKLFSAEPFVSQIDEMTIREWADVQGICLRNDKK</sequence>
<feature type="chain" id="PRO_0000388045" description="Structure-specific endonuclease subunit SLX4">
    <location>
        <begin position="1"/>
        <end position="748"/>
    </location>
</feature>
<feature type="region of interest" description="Disordered" evidence="4">
    <location>
        <begin position="62"/>
        <end position="104"/>
    </location>
</feature>
<feature type="region of interest" description="Disordered" evidence="4">
    <location>
        <begin position="215"/>
        <end position="236"/>
    </location>
</feature>
<feature type="region of interest" description="Disordered" evidence="4">
    <location>
        <begin position="277"/>
        <end position="303"/>
    </location>
</feature>
<feature type="region of interest" description="Disordered" evidence="4">
    <location>
        <begin position="591"/>
        <end position="610"/>
    </location>
</feature>
<feature type="compositionally biased region" description="Polar residues" evidence="4">
    <location>
        <begin position="62"/>
        <end position="75"/>
    </location>
</feature>
<feature type="compositionally biased region" description="Basic and acidic residues" evidence="4">
    <location>
        <begin position="76"/>
        <end position="88"/>
    </location>
</feature>
<feature type="compositionally biased region" description="Basic and acidic residues" evidence="4">
    <location>
        <begin position="222"/>
        <end position="236"/>
    </location>
</feature>
<feature type="compositionally biased region" description="Polar residues" evidence="4">
    <location>
        <begin position="277"/>
        <end position="298"/>
    </location>
</feature>
<feature type="compositionally biased region" description="Polar residues" evidence="4">
    <location>
        <begin position="591"/>
        <end position="602"/>
    </location>
</feature>
<feature type="modified residue" description="Phosphothreonine; by ATR and ATM" evidence="1">
    <location>
        <position position="72"/>
    </location>
</feature>
<feature type="modified residue" description="Phosphothreonine; by ATR and ATM" evidence="2">
    <location>
        <position position="113"/>
    </location>
</feature>
<feature type="modified residue" description="Phosphoserine; by ATR and ATM" evidence="1">
    <location>
        <position position="289"/>
    </location>
</feature>
<feature type="modified residue" description="Phosphothreonine; by ATR and ATM" evidence="2">
    <location>
        <position position="319"/>
    </location>
</feature>
<feature type="modified residue" description="Phosphoserine; by ATR and ATM" evidence="1">
    <location>
        <position position="329"/>
    </location>
</feature>
<feature type="modified residue" description="Phosphoserine; by ATR and ATM" evidence="2">
    <location>
        <position position="355"/>
    </location>
</feature>
<evidence type="ECO:0000250" key="1">
    <source>
        <dbReference type="UniProtKB" id="Q12098"/>
    </source>
</evidence>
<evidence type="ECO:0000255" key="2"/>
<evidence type="ECO:0000255" key="3">
    <source>
        <dbReference type="HAMAP-Rule" id="MF_03110"/>
    </source>
</evidence>
<evidence type="ECO:0000256" key="4">
    <source>
        <dbReference type="SAM" id="MobiDB-lite"/>
    </source>
</evidence>
<accession>B3LT96</accession>
<comment type="function">
    <text evidence="3">Regulatory subunit that interacts with and increases the activity of different structure-specific endonucleases. Has several distinct roles in protecting genome stability by resolving diverse forms of deleterious DNA structures. Component of the SLX1-SLX4 structure-specific endonuclease that resolves DNA secondary structures generated during DNA repair and recombination. Has endonuclease activity towards branched DNA substrates, introducing single-strand cuts in duplex DNA close to junctions with ss-DNA. Has a preference for simple Y, 5'-flap and replication fork-like structures. It cleaves the strand bearing the 5'-non-homologous arm at the branch site junction and generates ligatable, nicked products from the 5'-flap or replication fork substrates. Plays a critical role in maintaining the integrity of the ribosomal DNA (rDNA) loci, where it has a role in re-starting stalled replication forks. Has Holliday junction resolvase activity in vitro. Interacts with the structure-specific RAD1-RAD10 endonuclease and promotes RAD1-RAD10-dependent 3'-non-homologous tail removal (NHTR) during repair of double-strand breaks by single-strand annealing. SLX4 also promotes recovery from DNA-alkylation-induced replisome stalling during DNA replication by facilitating the error-free mode of lesion bypass. This does not require SLX1 or RAD1-RAD10, but probably RTT107.</text>
</comment>
<comment type="subunit">
    <text evidence="3">Forms a heterodimer with SLX1. Interacts with RAD1; catalytic subunit of the RAD1-RAD10 endonuclease. Interacts with RTT107.</text>
</comment>
<comment type="subcellular location">
    <subcellularLocation>
        <location evidence="3">Nucleus</location>
    </subcellularLocation>
    <subcellularLocation>
        <location evidence="3">Cytoplasm</location>
    </subcellularLocation>
</comment>
<comment type="PTM">
    <text evidence="3">Phosphorylated by ATR (MEC1) and ATM (TEL1) upon DNA damage. This appears to be required for the function with the RAD1-RAD10 endonuclease.</text>
</comment>
<comment type="similarity">
    <text evidence="3">Belongs to the SLX4 family.</text>
</comment>
<gene>
    <name evidence="3" type="primary">SLX4</name>
    <name type="ORF">SCRG_05114</name>
</gene>
<proteinExistence type="inferred from homology"/>
<keyword id="KW-0963">Cytoplasm</keyword>
<keyword id="KW-0227">DNA damage</keyword>
<keyword id="KW-0233">DNA recombination</keyword>
<keyword id="KW-0234">DNA repair</keyword>
<keyword id="KW-0539">Nucleus</keyword>
<keyword id="KW-0597">Phosphoprotein</keyword>
<organism>
    <name type="scientific">Saccharomyces cerevisiae (strain RM11-1a)</name>
    <name type="common">Baker's yeast</name>
    <dbReference type="NCBI Taxonomy" id="285006"/>
    <lineage>
        <taxon>Eukaryota</taxon>
        <taxon>Fungi</taxon>
        <taxon>Dikarya</taxon>
        <taxon>Ascomycota</taxon>
        <taxon>Saccharomycotina</taxon>
        <taxon>Saccharomycetes</taxon>
        <taxon>Saccharomycetales</taxon>
        <taxon>Saccharomycetaceae</taxon>
        <taxon>Saccharomyces</taxon>
    </lineage>
</organism>